<reference key="1">
    <citation type="journal article" date="2001" name="Science">
        <title>Comparative genomics of Listeria species.</title>
        <authorList>
            <person name="Glaser P."/>
            <person name="Frangeul L."/>
            <person name="Buchrieser C."/>
            <person name="Rusniok C."/>
            <person name="Amend A."/>
            <person name="Baquero F."/>
            <person name="Berche P."/>
            <person name="Bloecker H."/>
            <person name="Brandt P."/>
            <person name="Chakraborty T."/>
            <person name="Charbit A."/>
            <person name="Chetouani F."/>
            <person name="Couve E."/>
            <person name="de Daruvar A."/>
            <person name="Dehoux P."/>
            <person name="Domann E."/>
            <person name="Dominguez-Bernal G."/>
            <person name="Duchaud E."/>
            <person name="Durant L."/>
            <person name="Dussurget O."/>
            <person name="Entian K.-D."/>
            <person name="Fsihi H."/>
            <person name="Garcia-del Portillo F."/>
            <person name="Garrido P."/>
            <person name="Gautier L."/>
            <person name="Goebel W."/>
            <person name="Gomez-Lopez N."/>
            <person name="Hain T."/>
            <person name="Hauf J."/>
            <person name="Jackson D."/>
            <person name="Jones L.-M."/>
            <person name="Kaerst U."/>
            <person name="Kreft J."/>
            <person name="Kuhn M."/>
            <person name="Kunst F."/>
            <person name="Kurapkat G."/>
            <person name="Madueno E."/>
            <person name="Maitournam A."/>
            <person name="Mata Vicente J."/>
            <person name="Ng E."/>
            <person name="Nedjari H."/>
            <person name="Nordsiek G."/>
            <person name="Novella S."/>
            <person name="de Pablos B."/>
            <person name="Perez-Diaz J.-C."/>
            <person name="Purcell R."/>
            <person name="Remmel B."/>
            <person name="Rose M."/>
            <person name="Schlueter T."/>
            <person name="Simoes N."/>
            <person name="Tierrez A."/>
            <person name="Vazquez-Boland J.-A."/>
            <person name="Voss H."/>
            <person name="Wehland J."/>
            <person name="Cossart P."/>
        </authorList>
    </citation>
    <scope>NUCLEOTIDE SEQUENCE [LARGE SCALE GENOMIC DNA]</scope>
    <source>
        <strain>ATCC BAA-680 / CLIP 11262</strain>
    </source>
</reference>
<reference key="2">
    <citation type="journal article" date="2012" name="Science">
        <title>A programmable dual-RNA-guided DNA endonuclease in adaptive bacterial immunity.</title>
        <authorList>
            <person name="Jinek M."/>
            <person name="Chylinski K."/>
            <person name="Fonfara I."/>
            <person name="Hauer M."/>
            <person name="Doudna J.A."/>
            <person name="Charpentier E."/>
        </authorList>
    </citation>
    <scope>FUNCTION AS AN DNA ENDONUCLEASE</scope>
    <scope>SUBUNIT</scope>
    <scope>POSSIBLE BIOTECHNOLOGY</scope>
    <scope>RNA-BINDING</scope>
    <source>
        <strain>ATCC BAA-680 / CLIP 11262</strain>
    </source>
</reference>
<reference key="3">
    <citation type="journal article" date="2023" name="Nat. Commun.">
        <title>Assessing and advancing the safety of CRISPR-Cas tools: from DNA to RNA editing.</title>
        <authorList>
            <person name="Tao J."/>
            <person name="Bauer D.E."/>
            <person name="Chiarle R."/>
        </authorList>
    </citation>
    <scope>REVIEW ON SAFETY OF GENOME EDITING TOOLS</scope>
</reference>
<sequence>MKKPYTIGLDIGTNSVGWAVLTDQYDLVKRKMKIAGDSEKKQIKKNFWGVRLFDEGQTAADRRMARTARRRIERRRNRISYLQGIFAEEMSKTDANFFCRLSDSFYVDNEKRNSRHPFFATIEEEVEYHKNYPTIYHLREELVNSSEKADLRLVYLALAHIIKYRGNFLIEGALDTQNTSVDGIYKQFIQTYNQVFASGIEDGSLKKLEDNKDVAKILVEKVTRKEKLERILKLYPGEKSAGMFAQFISLIVGSKGNFQKPFDLIEKSDIECAKDSYEEDLESLLALIGDEYAELFVAAKNAYSAVVLSSIITVAETETNAKLSASMIERFDTHEEDLGELKAFIKLHLPKHYEEIFSNTEKHGYAGYIDGKTKQADFYKYMKMTLENIEGADYFIAKIEKENFLRKQRTFDNGAIPHQLHLEELEAILHQQAKYYPFLKENYDKIKSLVTFRIPYFVGPLANGQSEFAWLTRKADGEIRPWNIEEKVDFGKSAVDFIEKMTNKDTYLPKENVLPKHSLCYQKYLVYNELTKVRYINDQGKTSYFSGQEKEQIFNDLFKQKRKVKKKDLELFLRNMSHVESPTIEGLEDSFNSSYSTYHDLLKVGIKQEILDNPVNTEMLENIVKILTVFEDKRMIKEQLQQFSDVLDGVVLKKLERRHYTGWGRLSAKLLMGIRDKQSHLTILDYLMNDDGLNRNLMQLINDSNLSFKSIIEKEQVTTADKDIQSIVADLAGSPAIKKGILQSLKIVDELVSVMGYPPQTIVVEMARENQTTGKGKNNSRPRYKSLEKAIKEFGSQILKEHPTDNQELRNNRLYLYYLQNGKDMYTGQDLDIHNLSNYDIDHIVPQSFITDNSIDNLVLTSSAGNREKGDDVPPLEIVRKRKVFWEKLYQGNLMSKRKFDYLTKAERGGLTEADKARFIHRQLVETRQITKNVANILHQRFNYEKDDHGNTMKQVRIVTLKSALVSQFRKQFQLYKVRDVNDYHHAHDAYLNGVVANTLLKVYPQLEPEFVYGDYHQFDWFKANKATAKKQFYTNIMLFFAQKDRIIDENGEILWDKKYLDTVKKVMSYRQMNIVKKTEIQKGEFSKATIKPKGNSSKLIPRKTNWDPMKYGGLDSPNMAYAVVIEYAKGKNKLVFEKKIIRVTIMERKAFEKDEKAFLEEQGYRQPKVLAKLPKYTLYECEEGRRRMLASANEAQKGNQQVLPNHLVTLLHHAANCEVSDGKSLDYIESNREMFAELLAHVSEFAKRYTLAEANLNKINQLFEQNKEGDIKAIAQSFVDLMAFNAMGAPASFKFFETTIERKRYNNLKELLNSTIIYQSITGLYESRKRLDD</sequence>
<proteinExistence type="evidence at protein level"/>
<organism>
    <name type="scientific">Listeria innocua serovar 6a (strain ATCC BAA-680 / CLIP 11262)</name>
    <dbReference type="NCBI Taxonomy" id="272626"/>
    <lineage>
        <taxon>Bacteria</taxon>
        <taxon>Bacillati</taxon>
        <taxon>Bacillota</taxon>
        <taxon>Bacilli</taxon>
        <taxon>Bacillales</taxon>
        <taxon>Listeriaceae</taxon>
        <taxon>Listeria</taxon>
    </lineage>
</organism>
<feature type="chain" id="PRO_0000421685" description="CRISPR-associated endonuclease Cas9">
    <location>
        <begin position="1"/>
        <end position="1334"/>
    </location>
</feature>
<feature type="domain" description="HNH Cas9-type" evidence="2">
    <location>
        <begin position="773"/>
        <end position="924"/>
    </location>
</feature>
<feature type="active site" description="For RuvC-like nuclease domain" evidence="1">
    <location>
        <position position="10"/>
    </location>
</feature>
<feature type="active site" description="Proton acceptor for HNH nuclease domain" evidence="1">
    <location>
        <position position="843"/>
    </location>
</feature>
<feature type="binding site" evidence="1">
    <location>
        <position position="10"/>
    </location>
    <ligand>
        <name>Mn(2+)</name>
        <dbReference type="ChEBI" id="CHEBI:29035"/>
        <label>1</label>
    </ligand>
</feature>
<feature type="binding site" evidence="1">
    <location>
        <position position="10"/>
    </location>
    <ligand>
        <name>Mn(2+)</name>
        <dbReference type="ChEBI" id="CHEBI:29035"/>
        <label>2</label>
    </ligand>
</feature>
<feature type="binding site" evidence="1">
    <location>
        <position position="765"/>
    </location>
    <ligand>
        <name>Mn(2+)</name>
        <dbReference type="ChEBI" id="CHEBI:29035"/>
        <label>1</label>
    </ligand>
</feature>
<feature type="binding site" evidence="1">
    <location>
        <position position="769"/>
    </location>
    <ligand>
        <name>Mn(2+)</name>
        <dbReference type="ChEBI" id="CHEBI:29035"/>
        <label>1</label>
    </ligand>
</feature>
<feature type="binding site" evidence="1">
    <location>
        <position position="769"/>
    </location>
    <ligand>
        <name>Mn(2+)</name>
        <dbReference type="ChEBI" id="CHEBI:29035"/>
        <label>2</label>
    </ligand>
</feature>
<feature type="binding site" evidence="1">
    <location>
        <position position="986"/>
    </location>
    <ligand>
        <name>Mn(2+)</name>
        <dbReference type="ChEBI" id="CHEBI:29035"/>
        <label>2</label>
    </ligand>
</feature>
<accession>Q927P4</accession>
<name>CAS9_LISIN</name>
<evidence type="ECO:0000255" key="1">
    <source>
        <dbReference type="HAMAP-Rule" id="MF_01480"/>
    </source>
</evidence>
<evidence type="ECO:0000255" key="2">
    <source>
        <dbReference type="PROSITE-ProRule" id="PRU01085"/>
    </source>
</evidence>
<evidence type="ECO:0000269" key="3">
    <source>
    </source>
</evidence>
<evidence type="ECO:0000305" key="4"/>
<evidence type="ECO:0000305" key="5">
    <source>
    </source>
</evidence>
<evidence type="ECO:0000305" key="6">
    <source>
    </source>
</evidence>
<comment type="function">
    <text evidence="1 3">CRISPR (clustered regularly interspaced short palindromic repeat) is an adaptive immune system that provides protection against mobile genetic elements (viruses, transposable elements and conjugative plasmids). CRISPR clusters contain spacers, sequences complementary to antecedent mobile elements, and target invading nucleic acids. CRISPR clusters are transcribed and processed into CRISPR RNA (crRNA). In type II CRISPR systems correct processing of pre-crRNA requires a trans-encoded small RNA (tracrRNA), endogenous ribonuclease 3 (rnc) and this protein. The tracrRNA serves as a guide for ribonuclease 3-aided processing of pre-crRNA. Subsequently Cas9/crRNA/tracrRNA endonucleolytically cleaves linear or circular dsDNA target complementary to the spacer; Cas9 is inactive in the absence of the 2 guide RNAs (gRNA). Cas9 recognizes the protospacer adjacent motif (PAM) in the CRISPR repeat sequences to help distinguish self versus nonself, as targets within the bacterial CRISPR locus do not have PAMs. PAM recognition is also required for catalytic activity.</text>
</comment>
<comment type="cofactor">
    <cofactor evidence="4">
        <name>Mg(2+)</name>
        <dbReference type="ChEBI" id="CHEBI:18420"/>
    </cofactor>
    <text evidence="4">Endonuclease activity on target dsDNA requires Mg(2+).</text>
</comment>
<comment type="subunit">
    <text evidence="1 3">Monomer (By similarity). Binds crRNA and tracrRNA.</text>
</comment>
<comment type="domain">
    <text evidence="1">Has 2 endonuclease domains. The discontinuous RuvC-like domain cleaves the target DNA noncomplementary to crRNA while the HNH nuclease domain cleaves the target DNA complementary to crRNA.</text>
</comment>
<comment type="biotechnology">
    <text evidence="5 6">The simplicity of the Cas9-gRNAs RNA-directed DNA endonuclease activity may be used to target and modify a DNA sequence of interest.</text>
</comment>
<comment type="similarity">
    <text evidence="4">Belongs to the CRISPR-associated protein Cas9 family. Subtype II-A subfamily.</text>
</comment>
<protein>
    <recommendedName>
        <fullName evidence="1">CRISPR-associated endonuclease Cas9</fullName>
        <ecNumber evidence="1">3.1.-.-</ecNumber>
    </recommendedName>
</protein>
<keyword id="KW-0051">Antiviral defense</keyword>
<keyword id="KW-0238">DNA-binding</keyword>
<keyword id="KW-0255">Endonuclease</keyword>
<keyword id="KW-0378">Hydrolase</keyword>
<keyword id="KW-0460">Magnesium</keyword>
<keyword id="KW-0464">Manganese</keyword>
<keyword id="KW-0479">Metal-binding</keyword>
<keyword id="KW-0540">Nuclease</keyword>
<keyword id="KW-0694">RNA-binding</keyword>
<gene>
    <name evidence="1" type="primary">cas9</name>
    <name type="synonym">csn1</name>
    <name type="ordered locus">lin2744</name>
</gene>
<dbReference type="EC" id="3.1.-.-" evidence="1"/>
<dbReference type="EMBL" id="AL596173">
    <property type="protein sequence ID" value="CAC97970.1"/>
    <property type="molecule type" value="Genomic_DNA"/>
</dbReference>
<dbReference type="PIR" id="AB1775">
    <property type="entry name" value="AB1775"/>
</dbReference>
<dbReference type="RefSeq" id="WP_010991369.1">
    <property type="nucleotide sequence ID" value="NC_003212.1"/>
</dbReference>
<dbReference type="SMR" id="Q927P4"/>
<dbReference type="STRING" id="272626.gene:17567131"/>
<dbReference type="KEGG" id="lin:lin2744"/>
<dbReference type="eggNOG" id="COG3513">
    <property type="taxonomic scope" value="Bacteria"/>
</dbReference>
<dbReference type="HOGENOM" id="CLU_005604_0_0_9"/>
<dbReference type="OrthoDB" id="9757607at2"/>
<dbReference type="Proteomes" id="UP000002513">
    <property type="component" value="Chromosome"/>
</dbReference>
<dbReference type="GO" id="GO:0003677">
    <property type="term" value="F:DNA binding"/>
    <property type="evidence" value="ECO:0007669"/>
    <property type="project" value="UniProtKB-KW"/>
</dbReference>
<dbReference type="GO" id="GO:0004519">
    <property type="term" value="F:endonuclease activity"/>
    <property type="evidence" value="ECO:0007669"/>
    <property type="project" value="UniProtKB-UniRule"/>
</dbReference>
<dbReference type="GO" id="GO:0046872">
    <property type="term" value="F:metal ion binding"/>
    <property type="evidence" value="ECO:0007669"/>
    <property type="project" value="UniProtKB-UniRule"/>
</dbReference>
<dbReference type="GO" id="GO:0003723">
    <property type="term" value="F:RNA binding"/>
    <property type="evidence" value="ECO:0007669"/>
    <property type="project" value="UniProtKB-KW"/>
</dbReference>
<dbReference type="GO" id="GO:0051607">
    <property type="term" value="P:defense response to virus"/>
    <property type="evidence" value="ECO:0007669"/>
    <property type="project" value="UniProtKB-UniRule"/>
</dbReference>
<dbReference type="GO" id="GO:0043571">
    <property type="term" value="P:maintenance of CRISPR repeat elements"/>
    <property type="evidence" value="ECO:0007669"/>
    <property type="project" value="UniProtKB-UniRule"/>
</dbReference>
<dbReference type="CDD" id="cd09643">
    <property type="entry name" value="Csn1"/>
    <property type="match status" value="1"/>
</dbReference>
<dbReference type="Gene3D" id="1.10.30.50">
    <property type="match status" value="1"/>
</dbReference>
<dbReference type="Gene3D" id="3.30.420.10">
    <property type="entry name" value="Ribonuclease H-like superfamily/Ribonuclease H"/>
    <property type="match status" value="1"/>
</dbReference>
<dbReference type="HAMAP" id="MF_01480">
    <property type="entry name" value="Cas9"/>
    <property type="match status" value="1"/>
</dbReference>
<dbReference type="InterPro" id="IPR028629">
    <property type="entry name" value="Cas9"/>
</dbReference>
<dbReference type="InterPro" id="IPR032239">
    <property type="entry name" value="Cas9-BH"/>
</dbReference>
<dbReference type="InterPro" id="IPR032237">
    <property type="entry name" value="Cas9_PI"/>
</dbReference>
<dbReference type="InterPro" id="IPR032240">
    <property type="entry name" value="Cas9_REC"/>
</dbReference>
<dbReference type="InterPro" id="IPR055228">
    <property type="entry name" value="Cas9_RuvC"/>
</dbReference>
<dbReference type="InterPro" id="IPR033114">
    <property type="entry name" value="HNH_CAS9"/>
</dbReference>
<dbReference type="InterPro" id="IPR003615">
    <property type="entry name" value="HNH_nuc"/>
</dbReference>
<dbReference type="InterPro" id="IPR036397">
    <property type="entry name" value="RNaseH_sf"/>
</dbReference>
<dbReference type="NCBIfam" id="TIGR01865">
    <property type="entry name" value="cas_Csn1"/>
    <property type="match status" value="1"/>
</dbReference>
<dbReference type="Pfam" id="PF16593">
    <property type="entry name" value="Cas9-BH"/>
    <property type="match status" value="1"/>
</dbReference>
<dbReference type="Pfam" id="PF16595">
    <property type="entry name" value="Cas9_PI"/>
    <property type="match status" value="1"/>
</dbReference>
<dbReference type="Pfam" id="PF16592">
    <property type="entry name" value="Cas9_REC"/>
    <property type="match status" value="1"/>
</dbReference>
<dbReference type="Pfam" id="PF22702">
    <property type="entry name" value="Cas9_RuvC"/>
    <property type="match status" value="1"/>
</dbReference>
<dbReference type="Pfam" id="PF13395">
    <property type="entry name" value="HNH_4"/>
    <property type="match status" value="1"/>
</dbReference>
<dbReference type="PROSITE" id="PS51749">
    <property type="entry name" value="HNH_CAS9"/>
    <property type="match status" value="1"/>
</dbReference>